<reference key="1">
    <citation type="submission" date="1999-04" db="EMBL/GenBank/DDBJ databases">
        <title>Structural analysis of Arabidopsis thaliana chromosome 5. XI.</title>
        <authorList>
            <person name="Kaneko T."/>
            <person name="Katoh T."/>
            <person name="Asamizu E."/>
            <person name="Sato S."/>
            <person name="Nakamura Y."/>
            <person name="Kotani H."/>
            <person name="Tabata S."/>
        </authorList>
    </citation>
    <scope>NUCLEOTIDE SEQUENCE [LARGE SCALE GENOMIC DNA]</scope>
    <source>
        <strain>cv. Columbia</strain>
    </source>
</reference>
<reference key="2">
    <citation type="journal article" date="2017" name="Plant J.">
        <title>Araport11: a complete reannotation of the Arabidopsis thaliana reference genome.</title>
        <authorList>
            <person name="Cheng C.Y."/>
            <person name="Krishnakumar V."/>
            <person name="Chan A.P."/>
            <person name="Thibaud-Nissen F."/>
            <person name="Schobel S."/>
            <person name="Town C.D."/>
        </authorList>
    </citation>
    <scope>GENOME REANNOTATION</scope>
    <source>
        <strain>cv. Columbia</strain>
    </source>
</reference>
<reference key="3">
    <citation type="submission" date="2005-05" db="EMBL/GenBank/DDBJ databases">
        <authorList>
            <person name="Underwood B.A."/>
            <person name="Xiao Y.-L."/>
            <person name="Moskal W.A. Jr."/>
            <person name="Monaghan E.L."/>
            <person name="Wang W."/>
            <person name="Redman J.C."/>
            <person name="Wu H.C."/>
            <person name="Utterback T."/>
            <person name="Town C.D."/>
        </authorList>
    </citation>
    <scope>NUCLEOTIDE SEQUENCE [LARGE SCALE MRNA]</scope>
    <source>
        <strain>cv. Columbia</strain>
    </source>
</reference>
<reference key="4">
    <citation type="submission" date="2006-07" db="EMBL/GenBank/DDBJ databases">
        <title>Arabidopsis ORF clones.</title>
        <authorList>
            <person name="Quinitio C."/>
            <person name="Chen H."/>
            <person name="Kim C.J."/>
            <person name="Shinn P."/>
            <person name="Ecker J.R."/>
        </authorList>
    </citation>
    <scope>NUCLEOTIDE SEQUENCE [LARGE SCALE MRNA]</scope>
    <source>
        <strain>cv. Columbia</strain>
    </source>
</reference>
<reference key="5">
    <citation type="journal article" date="2007" name="Plant Physiol.">
        <title>A putative hydroxysteroid dehydrogenase involved in regulating plant growth and development.</title>
        <authorList>
            <person name="Li F."/>
            <person name="Asami T."/>
            <person name="Wu X."/>
            <person name="Tsang E.W."/>
            <person name="Cutler A.J."/>
        </authorList>
    </citation>
    <scope>GENE FAMILY</scope>
</reference>
<reference key="6">
    <citation type="journal article" date="2009" name="Plant Cell Physiol.">
        <title>Regulation of HSD1 in seeds of Arabidopsis thaliana.</title>
        <authorList>
            <person name="Baud S."/>
            <person name="Dichow N.R."/>
            <person name="Kelemen Z."/>
            <person name="d'Andrea S."/>
            <person name="To A."/>
            <person name="Berger N."/>
            <person name="Canonge M."/>
            <person name="Kronenberger J."/>
            <person name="Viterbo D."/>
            <person name="Dubreucq B."/>
            <person name="Lepiniec L."/>
            <person name="Chardot T."/>
            <person name="Miquel M."/>
        </authorList>
    </citation>
    <scope>GENE FAMILY</scope>
</reference>
<dbReference type="EC" id="1.1.1.-"/>
<dbReference type="EMBL" id="AB025619">
    <property type="protein sequence ID" value="BAB09144.1"/>
    <property type="molecule type" value="Genomic_DNA"/>
</dbReference>
<dbReference type="EMBL" id="CP002688">
    <property type="protein sequence ID" value="AED95966.1"/>
    <property type="molecule type" value="Genomic_DNA"/>
</dbReference>
<dbReference type="EMBL" id="DQ056713">
    <property type="protein sequence ID" value="AAY78859.1"/>
    <property type="molecule type" value="mRNA"/>
</dbReference>
<dbReference type="EMBL" id="BT026066">
    <property type="protein sequence ID" value="ABG48422.1"/>
    <property type="molecule type" value="mRNA"/>
</dbReference>
<dbReference type="RefSeq" id="NP_199871.1">
    <property type="nucleotide sequence ID" value="NM_124447.2"/>
</dbReference>
<dbReference type="SMR" id="P0DKC7"/>
<dbReference type="BioGRID" id="20374">
    <property type="interactions" value="1"/>
</dbReference>
<dbReference type="BioGRID" id="20386">
    <property type="interactions" value="1"/>
</dbReference>
<dbReference type="FunCoup" id="P0DKC7">
    <property type="interactions" value="117"/>
</dbReference>
<dbReference type="STRING" id="3702.P0DKC7"/>
<dbReference type="PaxDb" id="3702-AT5G50590.1"/>
<dbReference type="EnsemblPlants" id="AT5G50590.1">
    <property type="protein sequence ID" value="AT5G50590.1"/>
    <property type="gene ID" value="AT5G50590"/>
</dbReference>
<dbReference type="EnsemblPlants" id="AT5G50690.1">
    <property type="protein sequence ID" value="AT5G50690.1"/>
    <property type="gene ID" value="AT5G50690"/>
</dbReference>
<dbReference type="GeneID" id="835128"/>
<dbReference type="Gramene" id="AT5G50590.1">
    <property type="protein sequence ID" value="AT5G50590.1"/>
    <property type="gene ID" value="AT5G50590"/>
</dbReference>
<dbReference type="Gramene" id="AT5G50690.1">
    <property type="protein sequence ID" value="AT5G50690.1"/>
    <property type="gene ID" value="AT5G50690"/>
</dbReference>
<dbReference type="KEGG" id="ath:AT5G50590"/>
<dbReference type="KEGG" id="ath:AT5G50690"/>
<dbReference type="Araport" id="AT5G50590"/>
<dbReference type="TAIR" id="AT5G50590">
    <property type="gene designation" value="HSD4"/>
</dbReference>
<dbReference type="eggNOG" id="KOG1205">
    <property type="taxonomic scope" value="Eukaryota"/>
</dbReference>
<dbReference type="HOGENOM" id="CLU_010194_2_1_1"/>
<dbReference type="InParanoid" id="P0DKC7"/>
<dbReference type="PhylomeDB" id="P0DKC7"/>
<dbReference type="PRO" id="PR:P0DKC7"/>
<dbReference type="Proteomes" id="UP000006548">
    <property type="component" value="Chromosome 5"/>
</dbReference>
<dbReference type="ExpressionAtlas" id="P0DKC7">
    <property type="expression patterns" value="baseline"/>
</dbReference>
<dbReference type="GO" id="GO:0016020">
    <property type="term" value="C:membrane"/>
    <property type="evidence" value="ECO:0007669"/>
    <property type="project" value="UniProtKB-SubCell"/>
</dbReference>
<dbReference type="GO" id="GO:0016491">
    <property type="term" value="F:oxidoreductase activity"/>
    <property type="evidence" value="ECO:0007669"/>
    <property type="project" value="UniProtKB-KW"/>
</dbReference>
<dbReference type="GO" id="GO:0006694">
    <property type="term" value="P:steroid biosynthetic process"/>
    <property type="evidence" value="ECO:0007669"/>
    <property type="project" value="UniProtKB-KW"/>
</dbReference>
<dbReference type="CDD" id="cd05332">
    <property type="entry name" value="11beta-HSD1_like_SDR_c"/>
    <property type="match status" value="1"/>
</dbReference>
<dbReference type="Gene3D" id="3.40.50.720">
    <property type="entry name" value="NAD(P)-binding Rossmann-like Domain"/>
    <property type="match status" value="1"/>
</dbReference>
<dbReference type="InterPro" id="IPR036291">
    <property type="entry name" value="NAD(P)-bd_dom_sf"/>
</dbReference>
<dbReference type="InterPro" id="IPR020904">
    <property type="entry name" value="Sc_DH/Rdtase_CS"/>
</dbReference>
<dbReference type="InterPro" id="IPR002347">
    <property type="entry name" value="SDR_fam"/>
</dbReference>
<dbReference type="NCBIfam" id="NF004825">
    <property type="entry name" value="PRK06181.1"/>
    <property type="match status" value="1"/>
</dbReference>
<dbReference type="PANTHER" id="PTHR43391:SF90">
    <property type="entry name" value="11-BETA-HYDROXYSTEROID DEHYDROGENASE-LIKE 4A-RELATED"/>
    <property type="match status" value="1"/>
</dbReference>
<dbReference type="PANTHER" id="PTHR43391">
    <property type="entry name" value="RETINOL DEHYDROGENASE-RELATED"/>
    <property type="match status" value="1"/>
</dbReference>
<dbReference type="Pfam" id="PF00106">
    <property type="entry name" value="adh_short"/>
    <property type="match status" value="1"/>
</dbReference>
<dbReference type="PRINTS" id="PR00081">
    <property type="entry name" value="GDHRDH"/>
</dbReference>
<dbReference type="PRINTS" id="PR00080">
    <property type="entry name" value="SDRFAMILY"/>
</dbReference>
<dbReference type="SUPFAM" id="SSF51735">
    <property type="entry name" value="NAD(P)-binding Rossmann-fold domains"/>
    <property type="match status" value="1"/>
</dbReference>
<dbReference type="PROSITE" id="PS00061">
    <property type="entry name" value="ADH_SHORT"/>
    <property type="match status" value="1"/>
</dbReference>
<proteinExistence type="evidence at transcript level"/>
<keyword id="KW-0444">Lipid biosynthesis</keyword>
<keyword id="KW-0443">Lipid metabolism</keyword>
<keyword id="KW-0472">Membrane</keyword>
<keyword id="KW-0521">NADP</keyword>
<keyword id="KW-0560">Oxidoreductase</keyword>
<keyword id="KW-1185">Reference proteome</keyword>
<keyword id="KW-0735">Signal-anchor</keyword>
<keyword id="KW-0752">Steroid biosynthesis</keyword>
<keyword id="KW-0812">Transmembrane</keyword>
<keyword id="KW-1133">Transmembrane helix</keyword>
<evidence type="ECO:0000250" key="1"/>
<evidence type="ECO:0000255" key="2"/>
<evidence type="ECO:0000255" key="3">
    <source>
        <dbReference type="PROSITE-ProRule" id="PRU10001"/>
    </source>
</evidence>
<evidence type="ECO:0000305" key="4"/>
<protein>
    <recommendedName>
        <fullName>11-beta-hydroxysteroid dehydrogenase-like 4A</fullName>
        <ecNumber>1.1.1.-</ecNumber>
    </recommendedName>
    <alternativeName>
        <fullName>17-beta-hydroxysteroid dehydrogenase-like 4A</fullName>
        <ecNumber>1.1.1.-</ecNumber>
    </alternativeName>
    <alternativeName>
        <fullName>Hydroxysteroid dehydrogenase 4</fullName>
        <shortName>AtHSD4</shortName>
    </alternativeName>
</protein>
<name>HSD4A_ARATH</name>
<gene>
    <name type="primary">HSD4</name>
    <name type="ordered locus">At5g50590</name>
    <name type="ORF">MBA10.15</name>
</gene>
<feature type="chain" id="PRO_0000422282" description="11-beta-hydroxysteroid dehydrogenase-like 4A">
    <location>
        <begin position="1"/>
        <end position="299"/>
    </location>
</feature>
<feature type="transmembrane region" description="Helical; Signal-anchor for type II membrane protein" evidence="2">
    <location>
        <begin position="10"/>
        <end position="30"/>
    </location>
</feature>
<feature type="active site" description="Proton acceptor" evidence="3">
    <location>
        <position position="197"/>
    </location>
</feature>
<feature type="binding site" evidence="1">
    <location>
        <begin position="54"/>
        <end position="80"/>
    </location>
    <ligand>
        <name>NADP(+)</name>
        <dbReference type="ChEBI" id="CHEBI:58349"/>
    </ligand>
</feature>
<feature type="binding site" evidence="1">
    <location>
        <position position="105"/>
    </location>
    <ligand>
        <name>NADP(+)</name>
        <dbReference type="ChEBI" id="CHEBI:58349"/>
    </ligand>
</feature>
<feature type="binding site" evidence="1">
    <location>
        <position position="184"/>
    </location>
    <ligand>
        <name>substrate</name>
    </ligand>
</feature>
<feature type="binding site" evidence="1">
    <location>
        <begin position="197"/>
        <end position="201"/>
    </location>
    <ligand>
        <name>NADP(+)</name>
        <dbReference type="ChEBI" id="CHEBI:58349"/>
    </ligand>
</feature>
<feature type="binding site" evidence="1">
    <location>
        <position position="201"/>
    </location>
    <ligand>
        <name>NADP(+)</name>
        <dbReference type="ChEBI" id="CHEBI:58349"/>
    </ligand>
</feature>
<organism>
    <name type="scientific">Arabidopsis thaliana</name>
    <name type="common">Mouse-ear cress</name>
    <dbReference type="NCBI Taxonomy" id="3702"/>
    <lineage>
        <taxon>Eukaryota</taxon>
        <taxon>Viridiplantae</taxon>
        <taxon>Streptophyta</taxon>
        <taxon>Embryophyta</taxon>
        <taxon>Tracheophyta</taxon>
        <taxon>Spermatophyta</taxon>
        <taxon>Magnoliopsida</taxon>
        <taxon>eudicotyledons</taxon>
        <taxon>Gunneridae</taxon>
        <taxon>Pentapetalae</taxon>
        <taxon>rosids</taxon>
        <taxon>malvids</taxon>
        <taxon>Brassicales</taxon>
        <taxon>Brassicaceae</taxon>
        <taxon>Camelineae</taxon>
        <taxon>Arabidopsis</taxon>
    </lineage>
</organism>
<accession>P0DKC7</accession>
<accession>Q9FGP2</accession>
<sequence>MDLNNKIFNILLPIVTVSFLLVFMPFSIFFKLLQFIRGCKESEKVNGKVVIITGSSSGIGEHLAYEYARRGAYLTLVARREDRLQVVADRCRKLGSPDVAVVRGDVSVIKDCKRFVQETISRFGRLDHLVNNAGIAEAKFFEDYSEISDVLPIVNTNFWGPVYATHFAIPHLKKTKGKIIAVASPAGWSGVPRMSIYAASKAAMINFYETLRIELHPEVGVTIVFPGLIENGNTNPDLLAEKQDWSQVVTIESAAECAKAVVNGICRGKTFVAEPSWVRVLFWLSAICPELLISKPKRN</sequence>
<comment type="subcellular location">
    <subcellularLocation>
        <location evidence="4">Membrane</location>
        <topology evidence="4">Single-pass type II membrane protein</topology>
    </subcellularLocation>
</comment>
<comment type="similarity">
    <text evidence="4">Belongs to the short-chain dehydrogenases/reductases (SDR) family.</text>
</comment>